<gene>
    <name evidence="1" type="primary">psbE</name>
</gene>
<evidence type="ECO:0000255" key="1">
    <source>
        <dbReference type="HAMAP-Rule" id="MF_00642"/>
    </source>
</evidence>
<geneLocation type="chloroplast"/>
<sequence>MSGSTGERSFADIITSIRYWVIHSITIPSLFIAGWLFVSTGLAYDVFGSPRPNEYFTESRQGIPLITGRFDPLEQLDEFSRSF</sequence>
<dbReference type="EMBL" id="DQ887676">
    <property type="protein sequence ID" value="ABH88314.1"/>
    <property type="molecule type" value="Genomic_DNA"/>
</dbReference>
<dbReference type="RefSeq" id="YP_784403.1">
    <property type="nucleotide sequence ID" value="NC_008456.1"/>
</dbReference>
<dbReference type="SMR" id="Q06GY0"/>
<dbReference type="GeneID" id="4363579"/>
<dbReference type="GO" id="GO:0009535">
    <property type="term" value="C:chloroplast thylakoid membrane"/>
    <property type="evidence" value="ECO:0007669"/>
    <property type="project" value="UniProtKB-SubCell"/>
</dbReference>
<dbReference type="GO" id="GO:0009539">
    <property type="term" value="C:photosystem II reaction center"/>
    <property type="evidence" value="ECO:0007669"/>
    <property type="project" value="InterPro"/>
</dbReference>
<dbReference type="GO" id="GO:0009055">
    <property type="term" value="F:electron transfer activity"/>
    <property type="evidence" value="ECO:0007669"/>
    <property type="project" value="UniProtKB-UniRule"/>
</dbReference>
<dbReference type="GO" id="GO:0020037">
    <property type="term" value="F:heme binding"/>
    <property type="evidence" value="ECO:0007669"/>
    <property type="project" value="InterPro"/>
</dbReference>
<dbReference type="GO" id="GO:0005506">
    <property type="term" value="F:iron ion binding"/>
    <property type="evidence" value="ECO:0007669"/>
    <property type="project" value="UniProtKB-UniRule"/>
</dbReference>
<dbReference type="GO" id="GO:0009767">
    <property type="term" value="P:photosynthetic electron transport chain"/>
    <property type="evidence" value="ECO:0007669"/>
    <property type="project" value="InterPro"/>
</dbReference>
<dbReference type="Gene3D" id="1.20.5.860">
    <property type="entry name" value="Photosystem II cytochrome b559, alpha subunit"/>
    <property type="match status" value="1"/>
</dbReference>
<dbReference type="HAMAP" id="MF_00642">
    <property type="entry name" value="PSII_PsbE"/>
    <property type="match status" value="1"/>
</dbReference>
<dbReference type="InterPro" id="IPR006217">
    <property type="entry name" value="PSII_cyt_b559_asu"/>
</dbReference>
<dbReference type="InterPro" id="IPR037025">
    <property type="entry name" value="PSII_cyt_b559_asu_sf"/>
</dbReference>
<dbReference type="InterPro" id="IPR006216">
    <property type="entry name" value="PSII_cyt_b559_CS"/>
</dbReference>
<dbReference type="InterPro" id="IPR013081">
    <property type="entry name" value="PSII_cyt_b559_N"/>
</dbReference>
<dbReference type="InterPro" id="IPR013082">
    <property type="entry name" value="PSII_cytb559_asu_lum"/>
</dbReference>
<dbReference type="NCBIfam" id="TIGR01332">
    <property type="entry name" value="cyt_b559_alpha"/>
    <property type="match status" value="1"/>
</dbReference>
<dbReference type="PANTHER" id="PTHR33391">
    <property type="entry name" value="CYTOCHROME B559 SUBUNIT BETA-RELATED"/>
    <property type="match status" value="1"/>
</dbReference>
<dbReference type="PANTHER" id="PTHR33391:SF9">
    <property type="entry name" value="CYTOCHROME B559 SUBUNIT BETA-RELATED"/>
    <property type="match status" value="1"/>
</dbReference>
<dbReference type="Pfam" id="PF00283">
    <property type="entry name" value="Cytochrom_B559"/>
    <property type="match status" value="1"/>
</dbReference>
<dbReference type="Pfam" id="PF00284">
    <property type="entry name" value="Cytochrom_B559a"/>
    <property type="match status" value="1"/>
</dbReference>
<dbReference type="PIRSF" id="PIRSF000036">
    <property type="entry name" value="PsbE"/>
    <property type="match status" value="1"/>
</dbReference>
<dbReference type="SUPFAM" id="SSF161045">
    <property type="entry name" value="Cytochrome b559 subunits"/>
    <property type="match status" value="1"/>
</dbReference>
<dbReference type="PROSITE" id="PS00537">
    <property type="entry name" value="CYTOCHROME_B559"/>
    <property type="match status" value="1"/>
</dbReference>
<accession>Q06GY0</accession>
<comment type="function">
    <text evidence="1">This b-type cytochrome is tightly associated with the reaction center of photosystem II (PSII). PSII is a light-driven water:plastoquinone oxidoreductase that uses light energy to abstract electrons from H(2)O, generating O(2) and a proton gradient subsequently used for ATP formation. It consists of a core antenna complex that captures photons, and an electron transfer chain that converts photonic excitation into a charge separation.</text>
</comment>
<comment type="cofactor">
    <cofactor evidence="1">
        <name>heme b</name>
        <dbReference type="ChEBI" id="CHEBI:60344"/>
    </cofactor>
    <text evidence="1">With its partner (PsbF) binds heme. PSII binds additional chlorophylls, carotenoids and specific lipids.</text>
</comment>
<comment type="subunit">
    <text evidence="1">Heterodimer of an alpha subunit and a beta subunit. PSII is composed of 1 copy each of membrane proteins PsbA, PsbB, PsbC, PsbD, PsbE, PsbF, PsbH, PsbI, PsbJ, PsbK, PsbL, PsbM, PsbT, PsbX, PsbY, PsbZ, Psb30/Ycf12, at least 3 peripheral proteins of the oxygen-evolving complex and a large number of cofactors. It forms dimeric complexes.</text>
</comment>
<comment type="subcellular location">
    <subcellularLocation>
        <location evidence="1">Plastid</location>
        <location evidence="1">Chloroplast thylakoid membrane</location>
        <topology evidence="1">Single-pass membrane protein</topology>
    </subcellularLocation>
</comment>
<comment type="similarity">
    <text evidence="1">Belongs to the PsbE/PsbF family.</text>
</comment>
<keyword id="KW-0150">Chloroplast</keyword>
<keyword id="KW-0249">Electron transport</keyword>
<keyword id="KW-0349">Heme</keyword>
<keyword id="KW-0408">Iron</keyword>
<keyword id="KW-0472">Membrane</keyword>
<keyword id="KW-0479">Metal-binding</keyword>
<keyword id="KW-0602">Photosynthesis</keyword>
<keyword id="KW-0604">Photosystem II</keyword>
<keyword id="KW-0934">Plastid</keyword>
<keyword id="KW-0793">Thylakoid</keyword>
<keyword id="KW-0812">Transmembrane</keyword>
<keyword id="KW-1133">Transmembrane helix</keyword>
<keyword id="KW-0813">Transport</keyword>
<protein>
    <recommendedName>
        <fullName evidence="1">Cytochrome b559 subunit alpha</fullName>
    </recommendedName>
    <alternativeName>
        <fullName evidence="1">PSII reaction center subunit V</fullName>
    </alternativeName>
</protein>
<reference key="1">
    <citation type="journal article" date="2006" name="BMC Evol. Biol.">
        <title>Complete plastid genome sequences of Drimys, Liriodendron, and Piper: implications for the phylogenetic relationships of magnoliids.</title>
        <authorList>
            <person name="Cai Z."/>
            <person name="Penaflor C."/>
            <person name="Kuehl J.V."/>
            <person name="Leebens-Mack J."/>
            <person name="Carlson J.E."/>
            <person name="dePamphilis C.W."/>
            <person name="Boore J.L."/>
            <person name="Jansen R.K."/>
        </authorList>
    </citation>
    <scope>NUCLEOTIDE SEQUENCE [LARGE SCALE GENOMIC DNA]</scope>
</reference>
<feature type="chain" id="PRO_0000275706" description="Cytochrome b559 subunit alpha">
    <location>
        <begin position="1"/>
        <end position="83"/>
    </location>
</feature>
<feature type="transmembrane region" description="Helical" evidence="1">
    <location>
        <begin position="21"/>
        <end position="35"/>
    </location>
</feature>
<feature type="binding site" description="axial binding residue" evidence="1">
    <location>
        <position position="23"/>
    </location>
    <ligand>
        <name>heme</name>
        <dbReference type="ChEBI" id="CHEBI:30413"/>
        <note>ligand shared with beta subunit</note>
    </ligand>
    <ligandPart>
        <name>Fe</name>
        <dbReference type="ChEBI" id="CHEBI:18248"/>
    </ligandPart>
</feature>
<name>PSBE_DRIGR</name>
<proteinExistence type="inferred from homology"/>
<organism>
    <name type="scientific">Drimys granadensis</name>
    <dbReference type="NCBI Taxonomy" id="224735"/>
    <lineage>
        <taxon>Eukaryota</taxon>
        <taxon>Viridiplantae</taxon>
        <taxon>Streptophyta</taxon>
        <taxon>Embryophyta</taxon>
        <taxon>Tracheophyta</taxon>
        <taxon>Spermatophyta</taxon>
        <taxon>Magnoliopsida</taxon>
        <taxon>Magnoliidae</taxon>
        <taxon>Canellales</taxon>
        <taxon>Winteraceae</taxon>
        <taxon>Drimys</taxon>
    </lineage>
</organism>